<comment type="catalytic activity">
    <reaction>
        <text>beta-D-fructose 1,6-bisphosphate = D-glyceraldehyde 3-phosphate + dihydroxyacetone phosphate</text>
        <dbReference type="Rhea" id="RHEA:14729"/>
        <dbReference type="ChEBI" id="CHEBI:32966"/>
        <dbReference type="ChEBI" id="CHEBI:57642"/>
        <dbReference type="ChEBI" id="CHEBI:59776"/>
        <dbReference type="EC" id="4.1.2.13"/>
    </reaction>
</comment>
<comment type="pathway">
    <text>Carbohydrate degradation; glycolysis; D-glyceraldehyde 3-phosphate and glycerone phosphate from D-glucose: step 4/4.</text>
</comment>
<comment type="similarity">
    <text evidence="3">Belongs to the class I fructose-bisphosphate aldolase family.</text>
</comment>
<dbReference type="EC" id="4.1.2.13"/>
<dbReference type="EMBL" id="X71729">
    <property type="protein sequence ID" value="CAA50663.1"/>
    <property type="molecule type" value="Genomic_DNA"/>
</dbReference>
<dbReference type="EMBL" id="AM295250">
    <property type="protein sequence ID" value="CAL29049.1"/>
    <property type="molecule type" value="Genomic_DNA"/>
</dbReference>
<dbReference type="PIR" id="A49943">
    <property type="entry name" value="A49943"/>
</dbReference>
<dbReference type="RefSeq" id="WP_015901385.1">
    <property type="nucleotide sequence ID" value="NC_012121.1"/>
</dbReference>
<dbReference type="SMR" id="Q07159"/>
<dbReference type="GeneID" id="93794594"/>
<dbReference type="KEGG" id="sca:SCA_2144"/>
<dbReference type="eggNOG" id="COG3588">
    <property type="taxonomic scope" value="Bacteria"/>
</dbReference>
<dbReference type="HOGENOM" id="CLU_081560_0_0_9"/>
<dbReference type="OrthoDB" id="9813469at2"/>
<dbReference type="BioCyc" id="SCAR396513:SCA_RS10820-MONOMER"/>
<dbReference type="UniPathway" id="UPA00109">
    <property type="reaction ID" value="UER00183"/>
</dbReference>
<dbReference type="Proteomes" id="UP000000444">
    <property type="component" value="Chromosome"/>
</dbReference>
<dbReference type="GO" id="GO:0004332">
    <property type="term" value="F:fructose-bisphosphate aldolase activity"/>
    <property type="evidence" value="ECO:0007669"/>
    <property type="project" value="UniProtKB-UniRule"/>
</dbReference>
<dbReference type="GO" id="GO:0006096">
    <property type="term" value="P:glycolytic process"/>
    <property type="evidence" value="ECO:0007669"/>
    <property type="project" value="UniProtKB-UniRule"/>
</dbReference>
<dbReference type="Gene3D" id="3.20.20.70">
    <property type="entry name" value="Aldolase class I"/>
    <property type="match status" value="1"/>
</dbReference>
<dbReference type="HAMAP" id="MF_00729">
    <property type="entry name" value="FBP_aldolase_1"/>
    <property type="match status" value="1"/>
</dbReference>
<dbReference type="InterPro" id="IPR013785">
    <property type="entry name" value="Aldolase_TIM"/>
</dbReference>
<dbReference type="InterPro" id="IPR000741">
    <property type="entry name" value="FBA_I"/>
</dbReference>
<dbReference type="InterPro" id="IPR023014">
    <property type="entry name" value="FBA_I_Gram+-type"/>
</dbReference>
<dbReference type="NCBIfam" id="NF003784">
    <property type="entry name" value="PRK05377.1"/>
    <property type="match status" value="1"/>
</dbReference>
<dbReference type="PANTHER" id="PTHR11627">
    <property type="entry name" value="FRUCTOSE-BISPHOSPHATE ALDOLASE"/>
    <property type="match status" value="1"/>
</dbReference>
<dbReference type="Pfam" id="PF00274">
    <property type="entry name" value="Glycolytic"/>
    <property type="match status" value="1"/>
</dbReference>
<dbReference type="SUPFAM" id="SSF51569">
    <property type="entry name" value="Aldolase"/>
    <property type="match status" value="1"/>
</dbReference>
<evidence type="ECO:0000250" key="1"/>
<evidence type="ECO:0000269" key="2">
    <source>
    </source>
</evidence>
<evidence type="ECO:0000305" key="3"/>
<organism>
    <name type="scientific">Staphylococcus carnosus (strain TM300)</name>
    <dbReference type="NCBI Taxonomy" id="396513"/>
    <lineage>
        <taxon>Bacteria</taxon>
        <taxon>Bacillati</taxon>
        <taxon>Bacillota</taxon>
        <taxon>Bacilli</taxon>
        <taxon>Bacillales</taxon>
        <taxon>Staphylococcaceae</taxon>
        <taxon>Staphylococcus</taxon>
    </lineage>
</organism>
<proteinExistence type="evidence at protein level"/>
<sequence length="296" mass="32851">MNQEQFDKIKNGKGFIAALDQSGGSTPKALKDYGVEENEYSNDEEMFNLVHDMRTRIITSPAFNGEKILGAILFEQTMDREVEGKYTGSYLADKGIVPFLKVDKGLAEEADGVQLMKPIPDLDKLLDRANERGIFGTKMRSNILENNKEAIEKVVKQQFEVAKEIIAAGLVPIIEPEVNINAKDKEAIEANLAEAIKAELDNLKKDQYVMLKLTIPTKVNAYSELIEHPQVIRVVALSGGYSRDEANKILKQNDGLIASFSRALVSDLNAQQSDAEFNEKLQEAIDTIFDASVNKA</sequence>
<accession>Q07159</accession>
<accession>B9DJW7</accession>
<gene>
    <name type="primary">fda</name>
    <name type="ordered locus">Sca_2144</name>
</gene>
<protein>
    <recommendedName>
        <fullName>Fructose-bisphosphate aldolase class 1</fullName>
        <ecNumber>4.1.2.13</ecNumber>
    </recommendedName>
    <alternativeName>
        <fullName>Fructose-bisphosphate aldolase class I</fullName>
        <shortName>FBP aldolase</shortName>
    </alternativeName>
</protein>
<keyword id="KW-0903">Direct protein sequencing</keyword>
<keyword id="KW-0324">Glycolysis</keyword>
<keyword id="KW-0456">Lyase</keyword>
<keyword id="KW-1185">Reference proteome</keyword>
<keyword id="KW-0704">Schiff base</keyword>
<reference key="1">
    <citation type="journal article" date="1993" name="J. Bacteriol.">
        <title>Cloning, sequencing, and characterization of the gene encoding the class I fructose-1,6-bisphosphate aldolase of Staphylococcus carnosus.</title>
        <authorList>
            <person name="Witke C."/>
            <person name="Goetz F."/>
        </authorList>
    </citation>
    <scope>NUCLEOTIDE SEQUENCE [GENOMIC DNA]</scope>
    <scope>PROTEIN SEQUENCE OF 2-8</scope>
</reference>
<reference key="2">
    <citation type="journal article" date="2009" name="Appl. Environ. Microbiol.">
        <title>Genome analysis of the meat starter culture bacterium Staphylococcus carnosus TM300.</title>
        <authorList>
            <person name="Rosenstein R."/>
            <person name="Nerz C."/>
            <person name="Biswas L."/>
            <person name="Resch A."/>
            <person name="Raddatz G."/>
            <person name="Schuster S.C."/>
            <person name="Goetz F."/>
        </authorList>
    </citation>
    <scope>NUCLEOTIDE SEQUENCE [LARGE SCALE GENOMIC DNA]</scope>
    <source>
        <strain>TM300</strain>
    </source>
</reference>
<name>ALF1_STACT</name>
<feature type="initiator methionine" description="Removed" evidence="2">
    <location>
        <position position="1"/>
    </location>
</feature>
<feature type="chain" id="PRO_0000216909" description="Fructose-bisphosphate aldolase class 1">
    <location>
        <begin position="2"/>
        <end position="296"/>
    </location>
</feature>
<feature type="active site" description="Proton acceptor" evidence="1">
    <location>
        <position position="175"/>
    </location>
</feature>
<feature type="active site" description="Schiff-base intermediate with dihydroxyacetone-P" evidence="1">
    <location>
        <position position="212"/>
    </location>
</feature>